<accession>Q8EIG9</accession>
<reference key="1">
    <citation type="journal article" date="2002" name="Nat. Biotechnol.">
        <title>Genome sequence of the dissimilatory metal ion-reducing bacterium Shewanella oneidensis.</title>
        <authorList>
            <person name="Heidelberg J.F."/>
            <person name="Paulsen I.T."/>
            <person name="Nelson K.E."/>
            <person name="Gaidos E.J."/>
            <person name="Nelson W.C."/>
            <person name="Read T.D."/>
            <person name="Eisen J.A."/>
            <person name="Seshadri R."/>
            <person name="Ward N.L."/>
            <person name="Methe B.A."/>
            <person name="Clayton R.A."/>
            <person name="Meyer T."/>
            <person name="Tsapin A."/>
            <person name="Scott J."/>
            <person name="Beanan M.J."/>
            <person name="Brinkac L.M."/>
            <person name="Daugherty S.C."/>
            <person name="DeBoy R.T."/>
            <person name="Dodson R.J."/>
            <person name="Durkin A.S."/>
            <person name="Haft D.H."/>
            <person name="Kolonay J.F."/>
            <person name="Madupu R."/>
            <person name="Peterson J.D."/>
            <person name="Umayam L.A."/>
            <person name="White O."/>
            <person name="Wolf A.M."/>
            <person name="Vamathevan J.J."/>
            <person name="Weidman J.F."/>
            <person name="Impraim M."/>
            <person name="Lee K."/>
            <person name="Berry K.J."/>
            <person name="Lee C."/>
            <person name="Mueller J."/>
            <person name="Khouri H.M."/>
            <person name="Gill J."/>
            <person name="Utterback T.R."/>
            <person name="McDonald L.A."/>
            <person name="Feldblyum T.V."/>
            <person name="Smith H.O."/>
            <person name="Venter J.C."/>
            <person name="Nealson K.H."/>
            <person name="Fraser C.M."/>
        </authorList>
    </citation>
    <scope>NUCLEOTIDE SEQUENCE [LARGE SCALE GENOMIC DNA]</scope>
    <source>
        <strain>ATCC 700550 / JCM 31522 / CIP 106686 / LMG 19005 / NCIMB 14063 / MR-1</strain>
    </source>
</reference>
<feature type="chain" id="PRO_0000184886" description="3-methyl-2-oxobutanoate hydroxymethyltransferase">
    <location>
        <begin position="1"/>
        <end position="264"/>
    </location>
</feature>
<feature type="active site" description="Proton acceptor" evidence="1">
    <location>
        <position position="181"/>
    </location>
</feature>
<feature type="binding site" evidence="1">
    <location>
        <begin position="45"/>
        <end position="46"/>
    </location>
    <ligand>
        <name>3-methyl-2-oxobutanoate</name>
        <dbReference type="ChEBI" id="CHEBI:11851"/>
    </ligand>
</feature>
<feature type="binding site" evidence="1">
    <location>
        <position position="45"/>
    </location>
    <ligand>
        <name>Mg(2+)</name>
        <dbReference type="ChEBI" id="CHEBI:18420"/>
    </ligand>
</feature>
<feature type="binding site" evidence="1">
    <location>
        <position position="84"/>
    </location>
    <ligand>
        <name>3-methyl-2-oxobutanoate</name>
        <dbReference type="ChEBI" id="CHEBI:11851"/>
    </ligand>
</feature>
<feature type="binding site" evidence="1">
    <location>
        <position position="84"/>
    </location>
    <ligand>
        <name>Mg(2+)</name>
        <dbReference type="ChEBI" id="CHEBI:18420"/>
    </ligand>
</feature>
<feature type="binding site" evidence="1">
    <location>
        <position position="112"/>
    </location>
    <ligand>
        <name>3-methyl-2-oxobutanoate</name>
        <dbReference type="ChEBI" id="CHEBI:11851"/>
    </ligand>
</feature>
<feature type="binding site" evidence="1">
    <location>
        <position position="114"/>
    </location>
    <ligand>
        <name>Mg(2+)</name>
        <dbReference type="ChEBI" id="CHEBI:18420"/>
    </ligand>
</feature>
<comment type="function">
    <text evidence="1">Catalyzes the reversible reaction in which hydroxymethyl group from 5,10-methylenetetrahydrofolate is transferred onto alpha-ketoisovalerate to form ketopantoate.</text>
</comment>
<comment type="catalytic activity">
    <reaction evidence="1">
        <text>3-methyl-2-oxobutanoate + (6R)-5,10-methylene-5,6,7,8-tetrahydrofolate + H2O = 2-dehydropantoate + (6S)-5,6,7,8-tetrahydrofolate</text>
        <dbReference type="Rhea" id="RHEA:11824"/>
        <dbReference type="ChEBI" id="CHEBI:11561"/>
        <dbReference type="ChEBI" id="CHEBI:11851"/>
        <dbReference type="ChEBI" id="CHEBI:15377"/>
        <dbReference type="ChEBI" id="CHEBI:15636"/>
        <dbReference type="ChEBI" id="CHEBI:57453"/>
        <dbReference type="EC" id="2.1.2.11"/>
    </reaction>
</comment>
<comment type="cofactor">
    <cofactor evidence="1">
        <name>Mg(2+)</name>
        <dbReference type="ChEBI" id="CHEBI:18420"/>
    </cofactor>
    <text evidence="1">Binds 1 Mg(2+) ion per subunit.</text>
</comment>
<comment type="pathway">
    <text evidence="1">Cofactor biosynthesis; (R)-pantothenate biosynthesis; (R)-pantoate from 3-methyl-2-oxobutanoate: step 1/2.</text>
</comment>
<comment type="subunit">
    <text evidence="1">Homodecamer; pentamer of dimers.</text>
</comment>
<comment type="subcellular location">
    <subcellularLocation>
        <location evidence="1">Cytoplasm</location>
    </subcellularLocation>
</comment>
<comment type="similarity">
    <text evidence="1">Belongs to the PanB family.</text>
</comment>
<evidence type="ECO:0000255" key="1">
    <source>
        <dbReference type="HAMAP-Rule" id="MF_00156"/>
    </source>
</evidence>
<proteinExistence type="inferred from homology"/>
<name>PANB_SHEON</name>
<organism>
    <name type="scientific">Shewanella oneidensis (strain ATCC 700550 / JCM 31522 / CIP 106686 / LMG 19005 / NCIMB 14063 / MR-1)</name>
    <dbReference type="NCBI Taxonomy" id="211586"/>
    <lineage>
        <taxon>Bacteria</taxon>
        <taxon>Pseudomonadati</taxon>
        <taxon>Pseudomonadota</taxon>
        <taxon>Gammaproteobacteria</taxon>
        <taxon>Alteromonadales</taxon>
        <taxon>Shewanellaceae</taxon>
        <taxon>Shewanella</taxon>
    </lineage>
</organism>
<protein>
    <recommendedName>
        <fullName evidence="1">3-methyl-2-oxobutanoate hydroxymethyltransferase</fullName>
        <ecNumber evidence="1">2.1.2.11</ecNumber>
    </recommendedName>
    <alternativeName>
        <fullName evidence="1">Ketopantoate hydroxymethyltransferase</fullName>
        <shortName evidence="1">KPHMT</shortName>
    </alternativeName>
</protein>
<sequence>MSKVTSSTLLKYKQEGRKFTALTAYDASFASAFDGEGIDVLLVGDSLGMVLQGHDDTLPVTTADIAYHTRCVRRGIERSLLIADMPFMSYATPEQAMENATTLMQAGANMVKLEGGHWLLETVTKLTERGIPVCAHLGLTPQSVNVFGGFKVQGRDAENAQRIIDEAKALEAAGAQLLVVECIPASLATAITQALTIPVIGIGAGATTDGQILVMHDVLGISSGYIPRFSKNYLKQTGEIRSAVRAYIEEVANGSFPSAEHTFN</sequence>
<dbReference type="EC" id="2.1.2.11" evidence="1"/>
<dbReference type="EMBL" id="AE014299">
    <property type="protein sequence ID" value="AAN53946.1"/>
    <property type="molecule type" value="Genomic_DNA"/>
</dbReference>
<dbReference type="RefSeq" id="NP_716501.1">
    <property type="nucleotide sequence ID" value="NC_004347.2"/>
</dbReference>
<dbReference type="RefSeq" id="WP_011071160.1">
    <property type="nucleotide sequence ID" value="NC_004347.2"/>
</dbReference>
<dbReference type="SMR" id="Q8EIG9"/>
<dbReference type="STRING" id="211586.SO_0870"/>
<dbReference type="PaxDb" id="211586-SO_0870"/>
<dbReference type="KEGG" id="son:SO_0870"/>
<dbReference type="PATRIC" id="fig|211586.12.peg.834"/>
<dbReference type="eggNOG" id="COG0413">
    <property type="taxonomic scope" value="Bacteria"/>
</dbReference>
<dbReference type="HOGENOM" id="CLU_036645_1_0_6"/>
<dbReference type="OrthoDB" id="9781789at2"/>
<dbReference type="PhylomeDB" id="Q8EIG9"/>
<dbReference type="BioCyc" id="SONE211586:G1GMP-812-MONOMER"/>
<dbReference type="UniPathway" id="UPA00028">
    <property type="reaction ID" value="UER00003"/>
</dbReference>
<dbReference type="Proteomes" id="UP000008186">
    <property type="component" value="Chromosome"/>
</dbReference>
<dbReference type="GO" id="GO:0005737">
    <property type="term" value="C:cytoplasm"/>
    <property type="evidence" value="ECO:0000318"/>
    <property type="project" value="GO_Central"/>
</dbReference>
<dbReference type="GO" id="GO:0003864">
    <property type="term" value="F:3-methyl-2-oxobutanoate hydroxymethyltransferase activity"/>
    <property type="evidence" value="ECO:0000318"/>
    <property type="project" value="GO_Central"/>
</dbReference>
<dbReference type="GO" id="GO:0000287">
    <property type="term" value="F:magnesium ion binding"/>
    <property type="evidence" value="ECO:0000318"/>
    <property type="project" value="GO_Central"/>
</dbReference>
<dbReference type="GO" id="GO:0015940">
    <property type="term" value="P:pantothenate biosynthetic process"/>
    <property type="evidence" value="ECO:0000318"/>
    <property type="project" value="GO_Central"/>
</dbReference>
<dbReference type="CDD" id="cd06557">
    <property type="entry name" value="KPHMT-like"/>
    <property type="match status" value="1"/>
</dbReference>
<dbReference type="FunFam" id="3.20.20.60:FF:000003">
    <property type="entry name" value="3-methyl-2-oxobutanoate hydroxymethyltransferase"/>
    <property type="match status" value="1"/>
</dbReference>
<dbReference type="Gene3D" id="3.20.20.60">
    <property type="entry name" value="Phosphoenolpyruvate-binding domains"/>
    <property type="match status" value="1"/>
</dbReference>
<dbReference type="HAMAP" id="MF_00156">
    <property type="entry name" value="PanB"/>
    <property type="match status" value="1"/>
</dbReference>
<dbReference type="InterPro" id="IPR003700">
    <property type="entry name" value="Pantoate_hydroxy_MeTrfase"/>
</dbReference>
<dbReference type="InterPro" id="IPR015813">
    <property type="entry name" value="Pyrv/PenolPyrv_kinase-like_dom"/>
</dbReference>
<dbReference type="InterPro" id="IPR040442">
    <property type="entry name" value="Pyrv_kinase-like_dom_sf"/>
</dbReference>
<dbReference type="NCBIfam" id="TIGR00222">
    <property type="entry name" value="panB"/>
    <property type="match status" value="1"/>
</dbReference>
<dbReference type="NCBIfam" id="NF001452">
    <property type="entry name" value="PRK00311.1"/>
    <property type="match status" value="1"/>
</dbReference>
<dbReference type="PANTHER" id="PTHR20881">
    <property type="entry name" value="3-METHYL-2-OXOBUTANOATE HYDROXYMETHYLTRANSFERASE"/>
    <property type="match status" value="1"/>
</dbReference>
<dbReference type="PANTHER" id="PTHR20881:SF0">
    <property type="entry name" value="3-METHYL-2-OXOBUTANOATE HYDROXYMETHYLTRANSFERASE"/>
    <property type="match status" value="1"/>
</dbReference>
<dbReference type="Pfam" id="PF02548">
    <property type="entry name" value="Pantoate_transf"/>
    <property type="match status" value="1"/>
</dbReference>
<dbReference type="PIRSF" id="PIRSF000388">
    <property type="entry name" value="Pantoate_hydroxy_MeTrfase"/>
    <property type="match status" value="1"/>
</dbReference>
<dbReference type="SUPFAM" id="SSF51621">
    <property type="entry name" value="Phosphoenolpyruvate/pyruvate domain"/>
    <property type="match status" value="1"/>
</dbReference>
<gene>
    <name evidence="1" type="primary">panB</name>
    <name type="ordered locus">SO_0870</name>
</gene>
<keyword id="KW-0963">Cytoplasm</keyword>
<keyword id="KW-0460">Magnesium</keyword>
<keyword id="KW-0479">Metal-binding</keyword>
<keyword id="KW-0566">Pantothenate biosynthesis</keyword>
<keyword id="KW-1185">Reference proteome</keyword>
<keyword id="KW-0808">Transferase</keyword>